<feature type="chain" id="PRO_0000371057" description="ATP synthase subunit delta">
    <location>
        <begin position="1"/>
        <end position="178"/>
    </location>
</feature>
<keyword id="KW-0066">ATP synthesis</keyword>
<keyword id="KW-0997">Cell inner membrane</keyword>
<keyword id="KW-1003">Cell membrane</keyword>
<keyword id="KW-0139">CF(1)</keyword>
<keyword id="KW-0375">Hydrogen ion transport</keyword>
<keyword id="KW-0406">Ion transport</keyword>
<keyword id="KW-0472">Membrane</keyword>
<keyword id="KW-0813">Transport</keyword>
<dbReference type="EMBL" id="CP001010">
    <property type="protein sequence ID" value="ACB43349.1"/>
    <property type="molecule type" value="Genomic_DNA"/>
</dbReference>
<dbReference type="SMR" id="B1XSD1"/>
<dbReference type="STRING" id="452638.Pnec_0019"/>
<dbReference type="KEGG" id="pne:Pnec_0019"/>
<dbReference type="eggNOG" id="COG0712">
    <property type="taxonomic scope" value="Bacteria"/>
</dbReference>
<dbReference type="HOGENOM" id="CLU_085114_3_0_4"/>
<dbReference type="OrthoDB" id="9816221at2"/>
<dbReference type="GO" id="GO:0005886">
    <property type="term" value="C:plasma membrane"/>
    <property type="evidence" value="ECO:0007669"/>
    <property type="project" value="UniProtKB-SubCell"/>
</dbReference>
<dbReference type="GO" id="GO:0045259">
    <property type="term" value="C:proton-transporting ATP synthase complex"/>
    <property type="evidence" value="ECO:0007669"/>
    <property type="project" value="UniProtKB-KW"/>
</dbReference>
<dbReference type="GO" id="GO:0046933">
    <property type="term" value="F:proton-transporting ATP synthase activity, rotational mechanism"/>
    <property type="evidence" value="ECO:0007669"/>
    <property type="project" value="UniProtKB-UniRule"/>
</dbReference>
<dbReference type="Gene3D" id="1.10.520.20">
    <property type="entry name" value="N-terminal domain of the delta subunit of the F1F0-ATP synthase"/>
    <property type="match status" value="1"/>
</dbReference>
<dbReference type="HAMAP" id="MF_01416">
    <property type="entry name" value="ATP_synth_delta_bact"/>
    <property type="match status" value="1"/>
</dbReference>
<dbReference type="InterPro" id="IPR026015">
    <property type="entry name" value="ATP_synth_OSCP/delta_N_sf"/>
</dbReference>
<dbReference type="InterPro" id="IPR000711">
    <property type="entry name" value="ATPase_OSCP/dsu"/>
</dbReference>
<dbReference type="NCBIfam" id="TIGR01145">
    <property type="entry name" value="ATP_synt_delta"/>
    <property type="match status" value="1"/>
</dbReference>
<dbReference type="NCBIfam" id="NF004402">
    <property type="entry name" value="PRK05758.2-2"/>
    <property type="match status" value="1"/>
</dbReference>
<dbReference type="PANTHER" id="PTHR11910">
    <property type="entry name" value="ATP SYNTHASE DELTA CHAIN"/>
    <property type="match status" value="1"/>
</dbReference>
<dbReference type="Pfam" id="PF00213">
    <property type="entry name" value="OSCP"/>
    <property type="match status" value="1"/>
</dbReference>
<dbReference type="PRINTS" id="PR00125">
    <property type="entry name" value="ATPASEDELTA"/>
</dbReference>
<dbReference type="SUPFAM" id="SSF47928">
    <property type="entry name" value="N-terminal domain of the delta subunit of the F1F0-ATP synthase"/>
    <property type="match status" value="1"/>
</dbReference>
<sequence length="178" mass="18890">MADLATIARPYAEALFQSAKPAELAGCLEQLNELAQLAALPEVAALSNNPKVSADDLSKLLSGMVKTKLDPKVASFLNLVNQNHRLVAVPEIAHQFEAMKNKSEGAAEVNITSAFPLEGSALNDLLSSLKKRFGGKELRPTIQVDPTLIGGVRIQVGDEVMDSSVKVQLAQMQASLGA</sequence>
<gene>
    <name evidence="1" type="primary">atpH</name>
    <name type="ordered locus">Pnec_0019</name>
</gene>
<organism>
    <name type="scientific">Polynucleobacter necessarius subsp. necessarius (strain STIR1)</name>
    <dbReference type="NCBI Taxonomy" id="452638"/>
    <lineage>
        <taxon>Bacteria</taxon>
        <taxon>Pseudomonadati</taxon>
        <taxon>Pseudomonadota</taxon>
        <taxon>Betaproteobacteria</taxon>
        <taxon>Burkholderiales</taxon>
        <taxon>Burkholderiaceae</taxon>
        <taxon>Polynucleobacter</taxon>
    </lineage>
</organism>
<comment type="function">
    <text evidence="1">F(1)F(0) ATP synthase produces ATP from ADP in the presence of a proton or sodium gradient. F-type ATPases consist of two structural domains, F(1) containing the extramembraneous catalytic core and F(0) containing the membrane proton channel, linked together by a central stalk and a peripheral stalk. During catalysis, ATP synthesis in the catalytic domain of F(1) is coupled via a rotary mechanism of the central stalk subunits to proton translocation.</text>
</comment>
<comment type="function">
    <text evidence="1">This protein is part of the stalk that links CF(0) to CF(1). It either transmits conformational changes from CF(0) to CF(1) or is implicated in proton conduction.</text>
</comment>
<comment type="subunit">
    <text evidence="1">F-type ATPases have 2 components, F(1) - the catalytic core - and F(0) - the membrane proton channel. F(1) has five subunits: alpha(3), beta(3), gamma(1), delta(1), epsilon(1). F(0) has three main subunits: a(1), b(2) and c(10-14). The alpha and beta chains form an alternating ring which encloses part of the gamma chain. F(1) is attached to F(0) by a central stalk formed by the gamma and epsilon chains, while a peripheral stalk is formed by the delta and b chains.</text>
</comment>
<comment type="subcellular location">
    <subcellularLocation>
        <location evidence="1">Cell inner membrane</location>
        <topology evidence="1">Peripheral membrane protein</topology>
    </subcellularLocation>
</comment>
<comment type="similarity">
    <text evidence="1">Belongs to the ATPase delta chain family.</text>
</comment>
<protein>
    <recommendedName>
        <fullName evidence="1">ATP synthase subunit delta</fullName>
    </recommendedName>
    <alternativeName>
        <fullName evidence="1">ATP synthase F(1) sector subunit delta</fullName>
    </alternativeName>
    <alternativeName>
        <fullName evidence="1">F-type ATPase subunit delta</fullName>
        <shortName evidence="1">F-ATPase subunit delta</shortName>
    </alternativeName>
</protein>
<evidence type="ECO:0000255" key="1">
    <source>
        <dbReference type="HAMAP-Rule" id="MF_01416"/>
    </source>
</evidence>
<proteinExistence type="inferred from homology"/>
<reference key="1">
    <citation type="journal article" date="2013" name="Proc. Natl. Acad. Sci. U.S.A.">
        <title>Polynucleobacter necessarius, a model for genome reduction in both free-living and symbiotic bacteria.</title>
        <authorList>
            <person name="Boscaro V."/>
            <person name="Felletti M."/>
            <person name="Vannini C."/>
            <person name="Ackerman M.S."/>
            <person name="Chain P.S."/>
            <person name="Malfatti S."/>
            <person name="Vergez L.M."/>
            <person name="Shin M."/>
            <person name="Doak T.G."/>
            <person name="Lynch M."/>
            <person name="Petroni G."/>
        </authorList>
    </citation>
    <scope>NUCLEOTIDE SEQUENCE [LARGE SCALE GENOMIC DNA]</scope>
    <source>
        <strain>STIR1</strain>
    </source>
</reference>
<name>ATPD_POLNS</name>
<accession>B1XSD1</accession>